<name>EST_HEVBR</name>
<proteinExistence type="evidence at protein level"/>
<accession>Q7Y1X1</accession>
<accession>P83269</accession>
<dbReference type="EC" id="3.1.1.-"/>
<dbReference type="EMBL" id="AY283800">
    <property type="protein sequence ID" value="AAP37470.1"/>
    <property type="molecule type" value="mRNA"/>
</dbReference>
<dbReference type="SMR" id="Q7Y1X1"/>
<dbReference type="Allergome" id="3312">
    <property type="allergen name" value="Hev b 13.0101"/>
</dbReference>
<dbReference type="Allergome" id="702">
    <property type="allergen name" value="Hev b 13"/>
</dbReference>
<dbReference type="GO" id="GO:0016788">
    <property type="term" value="F:hydrolase activity, acting on ester bonds"/>
    <property type="evidence" value="ECO:0000314"/>
    <property type="project" value="UniProtKB"/>
</dbReference>
<dbReference type="GO" id="GO:0019863">
    <property type="term" value="F:IgE binding"/>
    <property type="evidence" value="ECO:0000314"/>
    <property type="project" value="UniProtKB"/>
</dbReference>
<dbReference type="GO" id="GO:0006952">
    <property type="term" value="P:defense response"/>
    <property type="evidence" value="ECO:0000303"/>
    <property type="project" value="UniProtKB"/>
</dbReference>
<dbReference type="CDD" id="cd01837">
    <property type="entry name" value="SGNH_plant_lipase_like"/>
    <property type="match status" value="1"/>
</dbReference>
<dbReference type="FunFam" id="3.40.50.1110:FF:000009">
    <property type="entry name" value="GDSL esterase/lipase At1g09390"/>
    <property type="match status" value="1"/>
</dbReference>
<dbReference type="Gene3D" id="3.40.50.1110">
    <property type="entry name" value="SGNH hydrolase"/>
    <property type="match status" value="1"/>
</dbReference>
<dbReference type="InterPro" id="IPR001087">
    <property type="entry name" value="GDSL"/>
</dbReference>
<dbReference type="InterPro" id="IPR036514">
    <property type="entry name" value="SGNH_hydro_sf"/>
</dbReference>
<dbReference type="InterPro" id="IPR035669">
    <property type="entry name" value="SGNH_plant_lipase-like"/>
</dbReference>
<dbReference type="PANTHER" id="PTHR22835:SF292">
    <property type="entry name" value="ESTERASE-LIKE ISOFORM X1"/>
    <property type="match status" value="1"/>
</dbReference>
<dbReference type="PANTHER" id="PTHR22835">
    <property type="entry name" value="ZINC FINGER FYVE DOMAIN CONTAINING PROTEIN"/>
    <property type="match status" value="1"/>
</dbReference>
<dbReference type="Pfam" id="PF00657">
    <property type="entry name" value="Lipase_GDSL"/>
    <property type="match status" value="1"/>
</dbReference>
<organism>
    <name type="scientific">Hevea brasiliensis</name>
    <name type="common">Para rubber tree</name>
    <name type="synonym">Siphonia brasiliensis</name>
    <dbReference type="NCBI Taxonomy" id="3981"/>
    <lineage>
        <taxon>Eukaryota</taxon>
        <taxon>Viridiplantae</taxon>
        <taxon>Streptophyta</taxon>
        <taxon>Embryophyta</taxon>
        <taxon>Tracheophyta</taxon>
        <taxon>Spermatophyta</taxon>
        <taxon>Magnoliopsida</taxon>
        <taxon>eudicotyledons</taxon>
        <taxon>Gunneridae</taxon>
        <taxon>Pentapetalae</taxon>
        <taxon>rosids</taxon>
        <taxon>fabids</taxon>
        <taxon>Malpighiales</taxon>
        <taxon>Euphorbiaceae</taxon>
        <taxon>Crotonoideae</taxon>
        <taxon>Micrandreae</taxon>
        <taxon>Hevea</taxon>
    </lineage>
</organism>
<feature type="signal peptide" evidence="2">
    <location>
        <begin position="1"/>
        <end position="26"/>
    </location>
</feature>
<feature type="chain" id="PRO_0000017851" description="Esterase" evidence="2">
    <location>
        <begin position="27"/>
        <end position="391"/>
    </location>
</feature>
<feature type="active site" description="Nucleophile" evidence="1">
    <location>
        <position position="41"/>
    </location>
</feature>
<feature type="active site" evidence="1">
    <location>
        <position position="347"/>
    </location>
</feature>
<feature type="active site" evidence="1">
    <location>
        <position position="350"/>
    </location>
</feature>
<feature type="glycosylation site" description="N-linked (GlcNAc...) asparagine" evidence="2">
    <location>
        <position position="186"/>
    </location>
</feature>
<feature type="glycosylation site" description="N-linked (GlcNAc...) asparagine" evidence="2">
    <location>
        <position position="193"/>
    </location>
</feature>
<feature type="glycosylation site" description="N-linked (GlcNAc...) asparagine" evidence="2">
    <location>
        <position position="313"/>
    </location>
</feature>
<feature type="sequence conflict" description="In Ref. 1; AA sequence." evidence="5" ref="1">
    <original>PF</original>
    <variation>SR</variation>
    <location>
        <begin position="129"/>
        <end position="130"/>
    </location>
</feature>
<reference evidence="5 6" key="1">
    <citation type="journal article" date="2004" name="J. Biol. Chem.">
        <title>Isolation and characterization of the early nodule-specific protein homologue (Hev b 13), an allergenic lipolytic esterase from Hevea brasiliensis latex.</title>
        <authorList>
            <person name="Arif S.A.M."/>
            <person name="Hamilton R.G."/>
            <person name="Yusof F."/>
            <person name="Chew N.-P."/>
            <person name="Loke Y.-H."/>
            <person name="Nimkar S."/>
            <person name="Beintema J.J."/>
            <person name="Yeang H.-Y."/>
        </authorList>
    </citation>
    <scope>NUCLEOTIDE SEQUENCE [MRNA]</scope>
    <scope>PROTEIN SEQUENCE OF 116-140 AND 287-295</scope>
    <scope>FUNCTION</scope>
    <scope>MASS SPECTROMETRY</scope>
    <scope>ALLERGEN</scope>
    <source>
        <strain evidence="3">cv. RRIM 600</strain>
        <tissue evidence="3">Latex</tissue>
    </source>
</reference>
<keyword id="KW-0020">Allergen</keyword>
<keyword id="KW-0903">Direct protein sequencing</keyword>
<keyword id="KW-0325">Glycoprotein</keyword>
<keyword id="KW-0378">Hydrolase</keyword>
<keyword id="KW-0611">Plant defense</keyword>
<keyword id="KW-0732">Signal</keyword>
<protein>
    <recommendedName>
        <fullName>Esterase</fullName>
        <ecNumber>3.1.1.-</ecNumber>
    </recommendedName>
    <alternativeName>
        <fullName>Early nodule-specific protein homolog</fullName>
    </alternativeName>
    <alternativeName>
        <fullName>Latex allergen Hev b 13</fullName>
    </alternativeName>
    <allergenName>Hev b 13</allergenName>
</protein>
<sequence length="391" mass="43329">MEFPETNNNPIITLSFLLCMLSLAYASETCDFPAIFNFGDSNSDTGGKAAAFYPLNPPYGETFFHRSTGRYSDGRLIIDFIAESFNLPYLSPYLSSLGSNFKHGADFATAGSTIKLPTTIIPAHGGFSPFYLDVQYSQFRQFIPRSQFIRETGGIFAELVPEEYYFEKALYTFDIGQNDLTEGFLNLTVEEVNATVPDLVNSFSANVKKIYDLGARTFWIHNTGPIGCLSFILTYFPWAEKDSAGCAKAYNEVAQHFNHKLKEIVAQLRKDLPLATFVHVDIYSVKYSLFSEPEKHGFEFPLITCCGYGGKYNFSVTAPCGDTVTADDGTKIVVGSCACPSVRVNWDGAHYTEAANEYFFDQISTGAFSDPPVPLNMACHKTESLRTLASV</sequence>
<comment type="function">
    <text evidence="3 4">Has lipase and esterase activities. May be involved in plant defense.</text>
</comment>
<comment type="PTM">
    <text evidence="3">The N-terminus is blocked.</text>
</comment>
<comment type="PTM">
    <text evidence="3">Glycosylated.</text>
</comment>
<comment type="mass spectrometry" mass="42975.0" method="MALDI" evidence="3"/>
<comment type="allergen">
    <text evidence="3">Causes an allergic reaction in human. Binds to IgE in 78% of latex allergic patients. IgE binding is abolished by deglycosylation.</text>
</comment>
<comment type="similarity">
    <text evidence="5">Belongs to the 'GDSL' lipolytic enzyme family.</text>
</comment>
<evidence type="ECO:0000250" key="1"/>
<evidence type="ECO:0000255" key="2"/>
<evidence type="ECO:0000269" key="3">
    <source>
    </source>
</evidence>
<evidence type="ECO:0000303" key="4">
    <source>
    </source>
</evidence>
<evidence type="ECO:0000305" key="5"/>
<evidence type="ECO:0000312" key="6">
    <source>
        <dbReference type="EMBL" id="AAP37470.1"/>
    </source>
</evidence>